<name>SUCC_LEGPA</name>
<organism>
    <name type="scientific">Legionella pneumophila (strain Paris)</name>
    <dbReference type="NCBI Taxonomy" id="297246"/>
    <lineage>
        <taxon>Bacteria</taxon>
        <taxon>Pseudomonadati</taxon>
        <taxon>Pseudomonadota</taxon>
        <taxon>Gammaproteobacteria</taxon>
        <taxon>Legionellales</taxon>
        <taxon>Legionellaceae</taxon>
        <taxon>Legionella</taxon>
    </lineage>
</organism>
<sequence>MNLHEYQAKQLFASYGLPVPRGEVAYNVEDALLVASQLSTSRWVVKAQVHAGGRGKAGGVKLVSSKDELAAVAKSMLGTRLVTYQTDARGQPVNAILVEETCEIDKELYLGAVVDRATRRVVIMASTEGGVEIEKVAHETPEKIFKVVVDPLVGVMPFQCRETAFKLGLKDDQIKQFTHLMMGLGKMFVDCDLSLLEINPLVITKSGQLICLDGKINIDGNALFRQPKLKNMRDVSQEDDRENRASDWELNYIPLDGTIGCMVNGAGLAMATMDVIKLHGGEPANFLDVGGGATKERVSEALKIIVSDEKVKGILVNIFGGIVRCDLIADGILAAVKEVDVKIPVVVRLEGNNAQLGAEILNKSNLNVIAATSLTDAAKKIVAAVSE</sequence>
<dbReference type="EC" id="6.2.1.5" evidence="1"/>
<dbReference type="EMBL" id="CR628336">
    <property type="protein sequence ID" value="CAH11747.1"/>
    <property type="molecule type" value="Genomic_DNA"/>
</dbReference>
<dbReference type="RefSeq" id="WP_011213164.1">
    <property type="nucleotide sequence ID" value="NC_006368.1"/>
</dbReference>
<dbReference type="SMR" id="Q5X7K6"/>
<dbReference type="KEGG" id="lpp:lpp0599"/>
<dbReference type="LegioList" id="lpp0599"/>
<dbReference type="HOGENOM" id="CLU_037430_0_2_6"/>
<dbReference type="UniPathway" id="UPA00223">
    <property type="reaction ID" value="UER00999"/>
</dbReference>
<dbReference type="GO" id="GO:0005829">
    <property type="term" value="C:cytosol"/>
    <property type="evidence" value="ECO:0007669"/>
    <property type="project" value="TreeGrafter"/>
</dbReference>
<dbReference type="GO" id="GO:0042709">
    <property type="term" value="C:succinate-CoA ligase complex"/>
    <property type="evidence" value="ECO:0007669"/>
    <property type="project" value="TreeGrafter"/>
</dbReference>
<dbReference type="GO" id="GO:0005524">
    <property type="term" value="F:ATP binding"/>
    <property type="evidence" value="ECO:0007669"/>
    <property type="project" value="UniProtKB-UniRule"/>
</dbReference>
<dbReference type="GO" id="GO:0000287">
    <property type="term" value="F:magnesium ion binding"/>
    <property type="evidence" value="ECO:0007669"/>
    <property type="project" value="UniProtKB-UniRule"/>
</dbReference>
<dbReference type="GO" id="GO:0004775">
    <property type="term" value="F:succinate-CoA ligase (ADP-forming) activity"/>
    <property type="evidence" value="ECO:0007669"/>
    <property type="project" value="UniProtKB-UniRule"/>
</dbReference>
<dbReference type="GO" id="GO:0004776">
    <property type="term" value="F:succinate-CoA ligase (GDP-forming) activity"/>
    <property type="evidence" value="ECO:0007669"/>
    <property type="project" value="RHEA"/>
</dbReference>
<dbReference type="GO" id="GO:0006104">
    <property type="term" value="P:succinyl-CoA metabolic process"/>
    <property type="evidence" value="ECO:0007669"/>
    <property type="project" value="TreeGrafter"/>
</dbReference>
<dbReference type="GO" id="GO:0006099">
    <property type="term" value="P:tricarboxylic acid cycle"/>
    <property type="evidence" value="ECO:0007669"/>
    <property type="project" value="UniProtKB-UniRule"/>
</dbReference>
<dbReference type="FunFam" id="3.30.1490.20:FF:000002">
    <property type="entry name" value="Succinate--CoA ligase [ADP-forming] subunit beta"/>
    <property type="match status" value="1"/>
</dbReference>
<dbReference type="FunFam" id="3.30.470.20:FF:000002">
    <property type="entry name" value="Succinate--CoA ligase [ADP-forming] subunit beta"/>
    <property type="match status" value="1"/>
</dbReference>
<dbReference type="FunFam" id="3.40.50.261:FF:000001">
    <property type="entry name" value="Succinate--CoA ligase [ADP-forming] subunit beta"/>
    <property type="match status" value="1"/>
</dbReference>
<dbReference type="Gene3D" id="3.30.1490.20">
    <property type="entry name" value="ATP-grasp fold, A domain"/>
    <property type="match status" value="1"/>
</dbReference>
<dbReference type="Gene3D" id="3.30.470.20">
    <property type="entry name" value="ATP-grasp fold, B domain"/>
    <property type="match status" value="1"/>
</dbReference>
<dbReference type="Gene3D" id="3.40.50.261">
    <property type="entry name" value="Succinyl-CoA synthetase domains"/>
    <property type="match status" value="1"/>
</dbReference>
<dbReference type="HAMAP" id="MF_00558">
    <property type="entry name" value="Succ_CoA_beta"/>
    <property type="match status" value="1"/>
</dbReference>
<dbReference type="InterPro" id="IPR011761">
    <property type="entry name" value="ATP-grasp"/>
</dbReference>
<dbReference type="InterPro" id="IPR013650">
    <property type="entry name" value="ATP-grasp_succ-CoA_synth-type"/>
</dbReference>
<dbReference type="InterPro" id="IPR013815">
    <property type="entry name" value="ATP_grasp_subdomain_1"/>
</dbReference>
<dbReference type="InterPro" id="IPR017866">
    <property type="entry name" value="Succ-CoA_synthase_bsu_CS"/>
</dbReference>
<dbReference type="InterPro" id="IPR005811">
    <property type="entry name" value="SUCC_ACL_C"/>
</dbReference>
<dbReference type="InterPro" id="IPR005809">
    <property type="entry name" value="Succ_CoA_ligase-like_bsu"/>
</dbReference>
<dbReference type="InterPro" id="IPR016102">
    <property type="entry name" value="Succinyl-CoA_synth-like"/>
</dbReference>
<dbReference type="NCBIfam" id="NF001913">
    <property type="entry name" value="PRK00696.1"/>
    <property type="match status" value="1"/>
</dbReference>
<dbReference type="NCBIfam" id="TIGR01016">
    <property type="entry name" value="sucCoAbeta"/>
    <property type="match status" value="1"/>
</dbReference>
<dbReference type="PANTHER" id="PTHR11815:SF10">
    <property type="entry name" value="SUCCINATE--COA LIGASE [GDP-FORMING] SUBUNIT BETA, MITOCHONDRIAL"/>
    <property type="match status" value="1"/>
</dbReference>
<dbReference type="PANTHER" id="PTHR11815">
    <property type="entry name" value="SUCCINYL-COA SYNTHETASE BETA CHAIN"/>
    <property type="match status" value="1"/>
</dbReference>
<dbReference type="Pfam" id="PF08442">
    <property type="entry name" value="ATP-grasp_2"/>
    <property type="match status" value="1"/>
</dbReference>
<dbReference type="Pfam" id="PF00549">
    <property type="entry name" value="Ligase_CoA"/>
    <property type="match status" value="1"/>
</dbReference>
<dbReference type="PIRSF" id="PIRSF001554">
    <property type="entry name" value="SucCS_beta"/>
    <property type="match status" value="1"/>
</dbReference>
<dbReference type="SUPFAM" id="SSF56059">
    <property type="entry name" value="Glutathione synthetase ATP-binding domain-like"/>
    <property type="match status" value="1"/>
</dbReference>
<dbReference type="SUPFAM" id="SSF52210">
    <property type="entry name" value="Succinyl-CoA synthetase domains"/>
    <property type="match status" value="1"/>
</dbReference>
<dbReference type="PROSITE" id="PS50975">
    <property type="entry name" value="ATP_GRASP"/>
    <property type="match status" value="1"/>
</dbReference>
<dbReference type="PROSITE" id="PS01217">
    <property type="entry name" value="SUCCINYL_COA_LIG_3"/>
    <property type="match status" value="1"/>
</dbReference>
<gene>
    <name evidence="1" type="primary">sucC</name>
    <name type="ordered locus">lpp0599</name>
</gene>
<evidence type="ECO:0000255" key="1">
    <source>
        <dbReference type="HAMAP-Rule" id="MF_00558"/>
    </source>
</evidence>
<feature type="chain" id="PRO_1000082112" description="Succinate--CoA ligase [ADP-forming] subunit beta">
    <location>
        <begin position="1"/>
        <end position="387"/>
    </location>
</feature>
<feature type="domain" description="ATP-grasp" evidence="1">
    <location>
        <begin position="9"/>
        <end position="244"/>
    </location>
</feature>
<feature type="binding site" evidence="1">
    <location>
        <position position="46"/>
    </location>
    <ligand>
        <name>ATP</name>
        <dbReference type="ChEBI" id="CHEBI:30616"/>
    </ligand>
</feature>
<feature type="binding site" evidence="1">
    <location>
        <begin position="53"/>
        <end position="55"/>
    </location>
    <ligand>
        <name>ATP</name>
        <dbReference type="ChEBI" id="CHEBI:30616"/>
    </ligand>
</feature>
<feature type="binding site" evidence="1">
    <location>
        <position position="99"/>
    </location>
    <ligand>
        <name>ATP</name>
        <dbReference type="ChEBI" id="CHEBI:30616"/>
    </ligand>
</feature>
<feature type="binding site" evidence="1">
    <location>
        <position position="102"/>
    </location>
    <ligand>
        <name>ATP</name>
        <dbReference type="ChEBI" id="CHEBI:30616"/>
    </ligand>
</feature>
<feature type="binding site" evidence="1">
    <location>
        <position position="107"/>
    </location>
    <ligand>
        <name>ATP</name>
        <dbReference type="ChEBI" id="CHEBI:30616"/>
    </ligand>
</feature>
<feature type="binding site" evidence="1">
    <location>
        <position position="199"/>
    </location>
    <ligand>
        <name>Mg(2+)</name>
        <dbReference type="ChEBI" id="CHEBI:18420"/>
    </ligand>
</feature>
<feature type="binding site" evidence="1">
    <location>
        <position position="213"/>
    </location>
    <ligand>
        <name>Mg(2+)</name>
        <dbReference type="ChEBI" id="CHEBI:18420"/>
    </ligand>
</feature>
<feature type="binding site" evidence="1">
    <location>
        <position position="264"/>
    </location>
    <ligand>
        <name>substrate</name>
        <note>ligand shared with subunit alpha</note>
    </ligand>
</feature>
<feature type="binding site" evidence="1">
    <location>
        <begin position="321"/>
        <end position="323"/>
    </location>
    <ligand>
        <name>substrate</name>
        <note>ligand shared with subunit alpha</note>
    </ligand>
</feature>
<keyword id="KW-0067">ATP-binding</keyword>
<keyword id="KW-0436">Ligase</keyword>
<keyword id="KW-0460">Magnesium</keyword>
<keyword id="KW-0479">Metal-binding</keyword>
<keyword id="KW-0547">Nucleotide-binding</keyword>
<keyword id="KW-0816">Tricarboxylic acid cycle</keyword>
<comment type="function">
    <text evidence="1">Succinyl-CoA synthetase functions in the citric acid cycle (TCA), coupling the hydrolysis of succinyl-CoA to the synthesis of either ATP or GTP and thus represents the only step of substrate-level phosphorylation in the TCA. The beta subunit provides nucleotide specificity of the enzyme and binds the substrate succinate, while the binding sites for coenzyme A and phosphate are found in the alpha subunit.</text>
</comment>
<comment type="catalytic activity">
    <reaction evidence="1">
        <text>succinate + ATP + CoA = succinyl-CoA + ADP + phosphate</text>
        <dbReference type="Rhea" id="RHEA:17661"/>
        <dbReference type="ChEBI" id="CHEBI:30031"/>
        <dbReference type="ChEBI" id="CHEBI:30616"/>
        <dbReference type="ChEBI" id="CHEBI:43474"/>
        <dbReference type="ChEBI" id="CHEBI:57287"/>
        <dbReference type="ChEBI" id="CHEBI:57292"/>
        <dbReference type="ChEBI" id="CHEBI:456216"/>
        <dbReference type="EC" id="6.2.1.5"/>
    </reaction>
    <physiologicalReaction direction="right-to-left" evidence="1">
        <dbReference type="Rhea" id="RHEA:17663"/>
    </physiologicalReaction>
</comment>
<comment type="catalytic activity">
    <reaction evidence="1">
        <text>GTP + succinate + CoA = succinyl-CoA + GDP + phosphate</text>
        <dbReference type="Rhea" id="RHEA:22120"/>
        <dbReference type="ChEBI" id="CHEBI:30031"/>
        <dbReference type="ChEBI" id="CHEBI:37565"/>
        <dbReference type="ChEBI" id="CHEBI:43474"/>
        <dbReference type="ChEBI" id="CHEBI:57287"/>
        <dbReference type="ChEBI" id="CHEBI:57292"/>
        <dbReference type="ChEBI" id="CHEBI:58189"/>
    </reaction>
    <physiologicalReaction direction="right-to-left" evidence="1">
        <dbReference type="Rhea" id="RHEA:22122"/>
    </physiologicalReaction>
</comment>
<comment type="cofactor">
    <cofactor evidence="1">
        <name>Mg(2+)</name>
        <dbReference type="ChEBI" id="CHEBI:18420"/>
    </cofactor>
    <text evidence="1">Binds 1 Mg(2+) ion per subunit.</text>
</comment>
<comment type="pathway">
    <text evidence="1">Carbohydrate metabolism; tricarboxylic acid cycle; succinate from succinyl-CoA (ligase route): step 1/1.</text>
</comment>
<comment type="subunit">
    <text evidence="1">Heterotetramer of two alpha and two beta subunits.</text>
</comment>
<comment type="similarity">
    <text evidence="1">Belongs to the succinate/malate CoA ligase beta subunit family.</text>
</comment>
<protein>
    <recommendedName>
        <fullName evidence="1">Succinate--CoA ligase [ADP-forming] subunit beta</fullName>
        <ecNumber evidence="1">6.2.1.5</ecNumber>
    </recommendedName>
    <alternativeName>
        <fullName evidence="1">Succinyl-CoA synthetase subunit beta</fullName>
        <shortName evidence="1">SCS-beta</shortName>
    </alternativeName>
</protein>
<accession>Q5X7K6</accession>
<reference key="1">
    <citation type="journal article" date="2004" name="Nat. Genet.">
        <title>Evidence in the Legionella pneumophila genome for exploitation of host cell functions and high genome plasticity.</title>
        <authorList>
            <person name="Cazalet C."/>
            <person name="Rusniok C."/>
            <person name="Brueggemann H."/>
            <person name="Zidane N."/>
            <person name="Magnier A."/>
            <person name="Ma L."/>
            <person name="Tichit M."/>
            <person name="Jarraud S."/>
            <person name="Bouchier C."/>
            <person name="Vandenesch F."/>
            <person name="Kunst F."/>
            <person name="Etienne J."/>
            <person name="Glaser P."/>
            <person name="Buchrieser C."/>
        </authorList>
    </citation>
    <scope>NUCLEOTIDE SEQUENCE [LARGE SCALE GENOMIC DNA]</scope>
    <source>
        <strain>Paris</strain>
    </source>
</reference>
<proteinExistence type="inferred from homology"/>